<sequence>MKILTYNQLQEAFRDYAPRDFAVSRDDAFRVMRIYYNEGGGNLVAFCNAQLGGRLAQFYFVMKMDLYSYKPCHNSHIFATCRNRCSSYNTFVAPGVKNVYMDKINVIKFKRNGSSFGEKTMALDKFLHNANRVHMQTPVIEGTYLRFRRAQRCRNNCVADDARPFALERFSDDFEVLDPSTLTTNIAPVMACYDIETHSDGHNSSKPECDVIMCIGLAVFKNDRFEKVCFVYHSEAVEIPQASDDTYVVVFNNENHMITAFFEFLKTVNPDVILDYNGDVFDLPYIRGRLKGDKPLLRRYDLPAMQPNTKLFITKIGNRTDTYYFNYYIHIDLYKYFGVDANKRDVENFQLNTLSQYYLGDAKVDLNWQTMVEMYNNKQLGTIIKYNVQDCLLPIRLFNKLKLTDFMYSQCIMYRLCTDDFICNISHLISSTFFHLALTNTRADPATGLTVSDPYFFNKDDLGLMSSKGSAGLTTGMSRLRRRRIPLKDVPATAIRLGAIDENVKYEGGKVLQPRAGVYEFAFSLDFNSLYLTIMIDICACLTNLILCEDGNVYLNQDKQAINVQLLLQLLKQRSELKKCRDSQTESEFLYDLYDQMQNLSKRTANSIYGYYGIFCKLLANHITRVGREKLTAAIGTVEGLSNDPDLLREFGLSTLTFKVLYGDTDSTFVLPVFRREEIPEEGRMATLGRICAAVEARVNGLFTNGYKMAFENLMSVLILLKKKKYCYINNNNKIVFKGWLVKKDMPVFMRVAFRAAIEQVLRHQDLSKCLDSLKANMLMYLDAFGITKPLTDYSFSMTYNDGAGKTAADDDEAAPPKRRVITVARHCREILVNKATDFVPGNGDRIPYVLLDMQGNVTQKAYPLRLFDAQTMRISWLKHMTILNTFMNELLEIFGDEHKDALAECYSAILEKYMQHQAYDKKRAALVKIATKRKAPSASDASGKRARKGAAPSDDESGSSEDEDAPCEPKCANNTFKFCLYKAQ</sequence>
<name>DPOL_NPVOP</name>
<keyword id="KW-0235">DNA replication</keyword>
<keyword id="KW-0238">DNA-binding</keyword>
<keyword id="KW-0239">DNA-directed DNA polymerase</keyword>
<keyword id="KW-0244">Early protein</keyword>
<keyword id="KW-0548">Nucleotidyltransferase</keyword>
<keyword id="KW-1185">Reference proteome</keyword>
<keyword id="KW-0808">Transferase</keyword>
<keyword id="KW-1194">Viral DNA replication</keyword>
<accession>Q83948</accession>
<accession>O12554</accession>
<accession>O12843</accession>
<reference key="1">
    <citation type="journal article" date="1996" name="J. Gen. Virol.">
        <title>The DNA polymerase and helicase genes of a baculovirus of Orgyia pseudosugata.</title>
        <authorList>
            <person name="Ahrens C.H."/>
            <person name="Rohrmann G.F."/>
        </authorList>
    </citation>
    <scope>NUCLEOTIDE SEQUENCE [GENOMIC DNA]</scope>
</reference>
<reference key="2">
    <citation type="journal article" date="1997" name="Virology">
        <title>The sequence of the Orgyia pseudotsugata multinucleocapsid nuclear polyhedrosis virus genome.</title>
        <authorList>
            <person name="Ahrens C.H."/>
            <person name="Russell R.R."/>
            <person name="Funk C.J."/>
            <person name="Evans J."/>
            <person name="Harwood S."/>
            <person name="Rohrmann G.F."/>
        </authorList>
    </citation>
    <scope>NUCLEOTIDE SEQUENCE [LARGE SCALE GENOMIC DNA]</scope>
</reference>
<protein>
    <recommendedName>
        <fullName>DNA polymerase</fullName>
        <ecNumber>2.7.7.7</ecNumber>
    </recommendedName>
</protein>
<proteinExistence type="inferred from homology"/>
<comment type="function">
    <text evidence="1">Replicates the viral genome, host DNA polymerases cannot substitute for the viral enzyme in this process.</text>
</comment>
<comment type="catalytic activity">
    <reaction>
        <text>DNA(n) + a 2'-deoxyribonucleoside 5'-triphosphate = DNA(n+1) + diphosphate</text>
        <dbReference type="Rhea" id="RHEA:22508"/>
        <dbReference type="Rhea" id="RHEA-COMP:17339"/>
        <dbReference type="Rhea" id="RHEA-COMP:17340"/>
        <dbReference type="ChEBI" id="CHEBI:33019"/>
        <dbReference type="ChEBI" id="CHEBI:61560"/>
        <dbReference type="ChEBI" id="CHEBI:173112"/>
        <dbReference type="EC" id="2.7.7.7"/>
    </reaction>
</comment>
<comment type="similarity">
    <text evidence="3">Belongs to the DNA polymerase type-B family.</text>
</comment>
<organismHost>
    <name type="scientific">Orgyia pseudotsugata</name>
    <name type="common">Douglas-fir tussock moth</name>
    <dbReference type="NCBI Taxonomy" id="33414"/>
</organismHost>
<feature type="chain" id="PRO_0000046530" description="DNA polymerase">
    <location>
        <begin position="1"/>
        <end position="985"/>
    </location>
</feature>
<feature type="region of interest" description="Disordered" evidence="2">
    <location>
        <begin position="936"/>
        <end position="972"/>
    </location>
</feature>
<feature type="compositionally biased region" description="Acidic residues" evidence="2">
    <location>
        <begin position="954"/>
        <end position="967"/>
    </location>
</feature>
<dbReference type="EC" id="2.7.7.7"/>
<dbReference type="EMBL" id="U39145">
    <property type="protein sequence ID" value="AAB04046.1"/>
    <property type="molecule type" value="Genomic_DNA"/>
</dbReference>
<dbReference type="EMBL" id="U75930">
    <property type="protein sequence ID" value="AAC59069.1"/>
    <property type="molecule type" value="Genomic_DNA"/>
</dbReference>
<dbReference type="PIR" id="T10339">
    <property type="entry name" value="T10339"/>
</dbReference>
<dbReference type="RefSeq" id="NP_046226.1">
    <property type="nucleotide sequence ID" value="NC_001875.2"/>
</dbReference>
<dbReference type="SMR" id="Q83948"/>
<dbReference type="KEGG" id="vg:912061"/>
<dbReference type="OrthoDB" id="165at10239"/>
<dbReference type="Proteomes" id="UP000009248">
    <property type="component" value="Genome"/>
</dbReference>
<dbReference type="GO" id="GO:0003677">
    <property type="term" value="F:DNA binding"/>
    <property type="evidence" value="ECO:0007669"/>
    <property type="project" value="UniProtKB-KW"/>
</dbReference>
<dbReference type="GO" id="GO:0003887">
    <property type="term" value="F:DNA-directed DNA polymerase activity"/>
    <property type="evidence" value="ECO:0007669"/>
    <property type="project" value="UniProtKB-KW"/>
</dbReference>
<dbReference type="GO" id="GO:0000166">
    <property type="term" value="F:nucleotide binding"/>
    <property type="evidence" value="ECO:0007669"/>
    <property type="project" value="InterPro"/>
</dbReference>
<dbReference type="GO" id="GO:0006261">
    <property type="term" value="P:DNA-templated DNA replication"/>
    <property type="evidence" value="ECO:0007669"/>
    <property type="project" value="TreeGrafter"/>
</dbReference>
<dbReference type="GO" id="GO:0039693">
    <property type="term" value="P:viral DNA genome replication"/>
    <property type="evidence" value="ECO:0007669"/>
    <property type="project" value="UniProtKB-KW"/>
</dbReference>
<dbReference type="GO" id="GO:0019079">
    <property type="term" value="P:viral genome replication"/>
    <property type="evidence" value="ECO:0000250"/>
    <property type="project" value="UniProtKB"/>
</dbReference>
<dbReference type="FunFam" id="1.10.132.60:FF:000018">
    <property type="entry name" value="DNA polymerase"/>
    <property type="match status" value="1"/>
</dbReference>
<dbReference type="FunFam" id="1.10.287.690:FF:000010">
    <property type="entry name" value="DNA polymerase"/>
    <property type="match status" value="1"/>
</dbReference>
<dbReference type="FunFam" id="3.30.420.10:FF:000173">
    <property type="entry name" value="DNA polymerase"/>
    <property type="match status" value="1"/>
</dbReference>
<dbReference type="Gene3D" id="1.10.132.60">
    <property type="entry name" value="DNA polymerase family B, C-terminal domain"/>
    <property type="match status" value="1"/>
</dbReference>
<dbReference type="Gene3D" id="1.10.287.690">
    <property type="entry name" value="Helix hairpin bin"/>
    <property type="match status" value="1"/>
</dbReference>
<dbReference type="Gene3D" id="3.90.1600.10">
    <property type="entry name" value="Palm domain of DNA polymerase"/>
    <property type="match status" value="1"/>
</dbReference>
<dbReference type="Gene3D" id="3.30.420.10">
    <property type="entry name" value="Ribonuclease H-like superfamily/Ribonuclease H"/>
    <property type="match status" value="1"/>
</dbReference>
<dbReference type="InterPro" id="IPR006172">
    <property type="entry name" value="DNA-dir_DNA_pol_B"/>
</dbReference>
<dbReference type="InterPro" id="IPR017964">
    <property type="entry name" value="DNA-dir_DNA_pol_B_CS"/>
</dbReference>
<dbReference type="InterPro" id="IPR006133">
    <property type="entry name" value="DNA-dir_DNA_pol_B_exonuc"/>
</dbReference>
<dbReference type="InterPro" id="IPR006134">
    <property type="entry name" value="DNA-dir_DNA_pol_B_multi_dom"/>
</dbReference>
<dbReference type="InterPro" id="IPR043502">
    <property type="entry name" value="DNA/RNA_pol_sf"/>
</dbReference>
<dbReference type="InterPro" id="IPR042087">
    <property type="entry name" value="DNA_pol_B_thumb"/>
</dbReference>
<dbReference type="InterPro" id="IPR023211">
    <property type="entry name" value="DNA_pol_palm_dom_sf"/>
</dbReference>
<dbReference type="InterPro" id="IPR050240">
    <property type="entry name" value="DNA_pol_type-B"/>
</dbReference>
<dbReference type="InterPro" id="IPR012337">
    <property type="entry name" value="RNaseH-like_sf"/>
</dbReference>
<dbReference type="InterPro" id="IPR036397">
    <property type="entry name" value="RNaseH_sf"/>
</dbReference>
<dbReference type="PANTHER" id="PTHR10322">
    <property type="entry name" value="DNA POLYMERASE CATALYTIC SUBUNIT"/>
    <property type="match status" value="1"/>
</dbReference>
<dbReference type="PANTHER" id="PTHR10322:SF23">
    <property type="entry name" value="DNA POLYMERASE DELTA CATALYTIC SUBUNIT"/>
    <property type="match status" value="1"/>
</dbReference>
<dbReference type="Pfam" id="PF00136">
    <property type="entry name" value="DNA_pol_B"/>
    <property type="match status" value="1"/>
</dbReference>
<dbReference type="Pfam" id="PF03104">
    <property type="entry name" value="DNA_pol_B_exo1"/>
    <property type="match status" value="1"/>
</dbReference>
<dbReference type="PRINTS" id="PR00106">
    <property type="entry name" value="DNAPOLB"/>
</dbReference>
<dbReference type="SMART" id="SM00486">
    <property type="entry name" value="POLBc"/>
    <property type="match status" value="1"/>
</dbReference>
<dbReference type="SUPFAM" id="SSF56672">
    <property type="entry name" value="DNA/RNA polymerases"/>
    <property type="match status" value="1"/>
</dbReference>
<dbReference type="SUPFAM" id="SSF53098">
    <property type="entry name" value="Ribonuclease H-like"/>
    <property type="match status" value="1"/>
</dbReference>
<dbReference type="PROSITE" id="PS00116">
    <property type="entry name" value="DNA_POLYMERASE_B"/>
    <property type="match status" value="1"/>
</dbReference>
<gene>
    <name type="primary">POL</name>
    <name type="ORF">ORF70</name>
</gene>
<evidence type="ECO:0000250" key="1"/>
<evidence type="ECO:0000256" key="2">
    <source>
        <dbReference type="SAM" id="MobiDB-lite"/>
    </source>
</evidence>
<evidence type="ECO:0000305" key="3"/>
<organism>
    <name type="scientific">Orgyia pseudotsugata multicapsid polyhedrosis virus</name>
    <name type="common">OpMNPV</name>
    <dbReference type="NCBI Taxonomy" id="262177"/>
    <lineage>
        <taxon>Viruses</taxon>
        <taxon>Viruses incertae sedis</taxon>
        <taxon>Naldaviricetes</taxon>
        <taxon>Lefavirales</taxon>
        <taxon>Baculoviridae</taxon>
        <taxon>Alphabaculovirus</taxon>
        <taxon>Alphabaculovirus orpseudotsugatae</taxon>
    </lineage>
</organism>